<evidence type="ECO:0000255" key="1">
    <source>
        <dbReference type="HAMAP-Rule" id="MF_00070"/>
    </source>
</evidence>
<evidence type="ECO:0000305" key="2"/>
<comment type="function">
    <text evidence="1">Catalyzes the proton-dependent uptake of 2-keto-3-deoxygluconate (KDG) into the cell.</text>
</comment>
<comment type="catalytic activity">
    <reaction evidence="1">
        <text>2-dehydro-3-deoxy-D-gluconate(in) + H(+)(in) = 2-dehydro-3-deoxy-D-gluconate(out) + H(+)(out)</text>
        <dbReference type="Rhea" id="RHEA:29943"/>
        <dbReference type="ChEBI" id="CHEBI:15378"/>
        <dbReference type="ChEBI" id="CHEBI:57990"/>
    </reaction>
    <physiologicalReaction direction="right-to-left" evidence="1">
        <dbReference type="Rhea" id="RHEA:29945"/>
    </physiologicalReaction>
</comment>
<comment type="subcellular location">
    <subcellularLocation>
        <location evidence="1">Cell inner membrane</location>
        <topology evidence="1">Multi-pass membrane protein</topology>
    </subcellularLocation>
</comment>
<comment type="similarity">
    <text evidence="1 2">Belongs to the KdgT transporter family.</text>
</comment>
<keyword id="KW-0997">Cell inner membrane</keyword>
<keyword id="KW-1003">Cell membrane</keyword>
<keyword id="KW-0472">Membrane</keyword>
<keyword id="KW-0762">Sugar transport</keyword>
<keyword id="KW-0769">Symport</keyword>
<keyword id="KW-0812">Transmembrane</keyword>
<keyword id="KW-1133">Transmembrane helix</keyword>
<keyword id="KW-0813">Transport</keyword>
<protein>
    <recommendedName>
        <fullName evidence="1">2-keto-3-deoxygluconate permease 1</fullName>
        <shortName evidence="1">KDG permease 1</shortName>
    </recommendedName>
</protein>
<sequence length="317" mass="31679">MNIKKAIERVPGGMMVVPLVIGAVINTFAPQALEIGGFTTALFKNGAAPLIGAFLLCMGAGISVKAAPQALLQGGTITLTKLLVAIGIGLGVEHLFGAEGIFGLSGVAIIAAMSNSNGGLYAALVGEFGNERDVGAISILSLNDGPFFTMIALGAAGMANIPIMALVAVLVPLVVGMILGNLDPHMRDFLTKGGPLLIPFFAFALGAGINLEMLLQGGLAGILLGVLTTFVGGFFNIRADRLVGGTGIAGAAASSTAGNAVATPLAIAQADPSLAEVAAAAAPLIAASVITTAILTPVLTSWVAKKQARQASLEKNA</sequence>
<organism>
    <name type="scientific">Salmonella typhi</name>
    <dbReference type="NCBI Taxonomy" id="90370"/>
    <lineage>
        <taxon>Bacteria</taxon>
        <taxon>Pseudomonadati</taxon>
        <taxon>Pseudomonadota</taxon>
        <taxon>Gammaproteobacteria</taxon>
        <taxon>Enterobacterales</taxon>
        <taxon>Enterobacteriaceae</taxon>
        <taxon>Salmonella</taxon>
    </lineage>
</organism>
<accession>P65208</accession>
<accession>Q8XGC0</accession>
<reference key="1">
    <citation type="journal article" date="2001" name="Nature">
        <title>Complete genome sequence of a multiple drug resistant Salmonella enterica serovar Typhi CT18.</title>
        <authorList>
            <person name="Parkhill J."/>
            <person name="Dougan G."/>
            <person name="James K.D."/>
            <person name="Thomson N.R."/>
            <person name="Pickard D."/>
            <person name="Wain J."/>
            <person name="Churcher C.M."/>
            <person name="Mungall K.L."/>
            <person name="Bentley S.D."/>
            <person name="Holden M.T.G."/>
            <person name="Sebaihia M."/>
            <person name="Baker S."/>
            <person name="Basham D."/>
            <person name="Brooks K."/>
            <person name="Chillingworth T."/>
            <person name="Connerton P."/>
            <person name="Cronin A."/>
            <person name="Davis P."/>
            <person name="Davies R.M."/>
            <person name="Dowd L."/>
            <person name="White N."/>
            <person name="Farrar J."/>
            <person name="Feltwell T."/>
            <person name="Hamlin N."/>
            <person name="Haque A."/>
            <person name="Hien T.T."/>
            <person name="Holroyd S."/>
            <person name="Jagels K."/>
            <person name="Krogh A."/>
            <person name="Larsen T.S."/>
            <person name="Leather S."/>
            <person name="Moule S."/>
            <person name="O'Gaora P."/>
            <person name="Parry C."/>
            <person name="Quail M.A."/>
            <person name="Rutherford K.M."/>
            <person name="Simmonds M."/>
            <person name="Skelton J."/>
            <person name="Stevens K."/>
            <person name="Whitehead S."/>
            <person name="Barrell B.G."/>
        </authorList>
    </citation>
    <scope>NUCLEOTIDE SEQUENCE [LARGE SCALE GENOMIC DNA]</scope>
    <source>
        <strain>CT18</strain>
    </source>
</reference>
<reference key="2">
    <citation type="journal article" date="2003" name="J. Bacteriol.">
        <title>Comparative genomics of Salmonella enterica serovar Typhi strains Ty2 and CT18.</title>
        <authorList>
            <person name="Deng W."/>
            <person name="Liou S.-R."/>
            <person name="Plunkett G. III"/>
            <person name="Mayhew G.F."/>
            <person name="Rose D.J."/>
            <person name="Burland V."/>
            <person name="Kodoyianni V."/>
            <person name="Schwartz D.C."/>
            <person name="Blattner F.R."/>
        </authorList>
    </citation>
    <scope>NUCLEOTIDE SEQUENCE [LARGE SCALE GENOMIC DNA]</scope>
    <source>
        <strain>ATCC 700931 / Ty2</strain>
    </source>
</reference>
<feature type="chain" id="PRO_0000209680" description="2-keto-3-deoxygluconate permease 1">
    <location>
        <begin position="1"/>
        <end position="317"/>
    </location>
</feature>
<feature type="transmembrane region" description="Helical" evidence="1">
    <location>
        <begin position="10"/>
        <end position="30"/>
    </location>
</feature>
<feature type="transmembrane region" description="Helical" evidence="1">
    <location>
        <begin position="47"/>
        <end position="67"/>
    </location>
</feature>
<feature type="transmembrane region" description="Helical" evidence="1">
    <location>
        <begin position="82"/>
        <end position="102"/>
    </location>
</feature>
<feature type="transmembrane region" description="Helical" evidence="1">
    <location>
        <begin position="106"/>
        <end position="126"/>
    </location>
</feature>
<feature type="transmembrane region" description="Helical" evidence="1">
    <location>
        <begin position="134"/>
        <end position="154"/>
    </location>
</feature>
<feature type="transmembrane region" description="Helical" evidence="1">
    <location>
        <begin position="159"/>
        <end position="179"/>
    </location>
</feature>
<feature type="transmembrane region" description="Helical" evidence="1">
    <location>
        <begin position="195"/>
        <end position="215"/>
    </location>
</feature>
<feature type="transmembrane region" description="Helical" evidence="1">
    <location>
        <begin position="217"/>
        <end position="237"/>
    </location>
</feature>
<feature type="transmembrane region" description="Helical" evidence="1">
    <location>
        <begin position="248"/>
        <end position="268"/>
    </location>
</feature>
<feature type="transmembrane region" description="Helical" evidence="1">
    <location>
        <begin position="279"/>
        <end position="299"/>
    </location>
</feature>
<dbReference type="EMBL" id="AL513382">
    <property type="protein sequence ID" value="CAD01319.1"/>
    <property type="molecule type" value="Genomic_DNA"/>
</dbReference>
<dbReference type="EMBL" id="AE014613">
    <property type="protein sequence ID" value="AAO67898.1"/>
    <property type="molecule type" value="Genomic_DNA"/>
</dbReference>
<dbReference type="RefSeq" id="NP_454774.1">
    <property type="nucleotide sequence ID" value="NC_003198.1"/>
</dbReference>
<dbReference type="RefSeq" id="WP_001022089.1">
    <property type="nucleotide sequence ID" value="NZ_WSUR01000009.1"/>
</dbReference>
<dbReference type="STRING" id="220341.gene:17584221"/>
<dbReference type="KEGG" id="stt:t0166"/>
<dbReference type="KEGG" id="sty:STY0183"/>
<dbReference type="PATRIC" id="fig|220341.7.peg.186"/>
<dbReference type="eggNOG" id="ENOG502Z7JT">
    <property type="taxonomic scope" value="Bacteria"/>
</dbReference>
<dbReference type="HOGENOM" id="CLU_057476_0_0_6"/>
<dbReference type="OMA" id="NIKATPY"/>
<dbReference type="OrthoDB" id="3185611at2"/>
<dbReference type="Proteomes" id="UP000000541">
    <property type="component" value="Chromosome"/>
</dbReference>
<dbReference type="Proteomes" id="UP000002670">
    <property type="component" value="Chromosome"/>
</dbReference>
<dbReference type="GO" id="GO:0005886">
    <property type="term" value="C:plasma membrane"/>
    <property type="evidence" value="ECO:0007669"/>
    <property type="project" value="UniProtKB-SubCell"/>
</dbReference>
<dbReference type="GO" id="GO:0015649">
    <property type="term" value="F:2-keto-3-deoxygluconate:proton symporter activity"/>
    <property type="evidence" value="ECO:0007669"/>
    <property type="project" value="UniProtKB-UniRule"/>
</dbReference>
<dbReference type="HAMAP" id="MF_00070">
    <property type="entry name" value="KdgT"/>
    <property type="match status" value="1"/>
</dbReference>
<dbReference type="InterPro" id="IPR004684">
    <property type="entry name" value="2keto-3dGluconate_permease"/>
</dbReference>
<dbReference type="Pfam" id="PF03812">
    <property type="entry name" value="KdgT"/>
    <property type="match status" value="1"/>
</dbReference>
<proteinExistence type="inferred from homology"/>
<name>KDGT1_SALTI</name>
<gene>
    <name evidence="1" type="primary">kdgT1</name>
    <name type="synonym">kdgT</name>
    <name type="ordered locus">STY0183</name>
    <name type="ordered locus">t0166</name>
</gene>